<evidence type="ECO:0000250" key="1"/>
<evidence type="ECO:0000255" key="2">
    <source>
        <dbReference type="PROSITE-ProRule" id="PRU00251"/>
    </source>
</evidence>
<evidence type="ECO:0000255" key="3">
    <source>
        <dbReference type="PROSITE-ProRule" id="PRU00629"/>
    </source>
</evidence>
<dbReference type="EMBL" id="AY514055">
    <property type="protein sequence ID" value="AAS67313.1"/>
    <property type="molecule type" value="mRNA"/>
</dbReference>
<dbReference type="SMR" id="Q6R4R6"/>
<dbReference type="GO" id="GO:0005634">
    <property type="term" value="C:nucleus"/>
    <property type="evidence" value="ECO:0007669"/>
    <property type="project" value="UniProtKB-SubCell"/>
</dbReference>
<dbReference type="GO" id="GO:0003700">
    <property type="term" value="F:DNA-binding transcription factor activity"/>
    <property type="evidence" value="ECO:0007669"/>
    <property type="project" value="InterPro"/>
</dbReference>
<dbReference type="GO" id="GO:0046983">
    <property type="term" value="F:protein dimerization activity"/>
    <property type="evidence" value="ECO:0007669"/>
    <property type="project" value="InterPro"/>
</dbReference>
<dbReference type="GO" id="GO:0000977">
    <property type="term" value="F:RNA polymerase II transcription regulatory region sequence-specific DNA binding"/>
    <property type="evidence" value="ECO:0007669"/>
    <property type="project" value="InterPro"/>
</dbReference>
<dbReference type="GO" id="GO:0030154">
    <property type="term" value="P:cell differentiation"/>
    <property type="evidence" value="ECO:0007669"/>
    <property type="project" value="UniProtKB-KW"/>
</dbReference>
<dbReference type="GO" id="GO:0009908">
    <property type="term" value="P:flower development"/>
    <property type="evidence" value="ECO:0007669"/>
    <property type="project" value="UniProtKB-KW"/>
</dbReference>
<dbReference type="GO" id="GO:0045944">
    <property type="term" value="P:positive regulation of transcription by RNA polymerase II"/>
    <property type="evidence" value="ECO:0007669"/>
    <property type="project" value="InterPro"/>
</dbReference>
<dbReference type="CDD" id="cd00265">
    <property type="entry name" value="MADS_MEF2_like"/>
    <property type="match status" value="1"/>
</dbReference>
<dbReference type="FunFam" id="3.40.1810.10:FF:000003">
    <property type="entry name" value="MADS-box transcription factor MADS-MC"/>
    <property type="match status" value="1"/>
</dbReference>
<dbReference type="Gene3D" id="3.40.1810.10">
    <property type="entry name" value="Transcription factor, MADS-box"/>
    <property type="match status" value="1"/>
</dbReference>
<dbReference type="InterPro" id="IPR050142">
    <property type="entry name" value="MADS-box/MEF2_TF"/>
</dbReference>
<dbReference type="InterPro" id="IPR033896">
    <property type="entry name" value="MEF2-like_N"/>
</dbReference>
<dbReference type="InterPro" id="IPR002487">
    <property type="entry name" value="TF_Kbox"/>
</dbReference>
<dbReference type="InterPro" id="IPR002100">
    <property type="entry name" value="TF_MADSbox"/>
</dbReference>
<dbReference type="InterPro" id="IPR036879">
    <property type="entry name" value="TF_MADSbox_sf"/>
</dbReference>
<dbReference type="PANTHER" id="PTHR48019">
    <property type="entry name" value="SERUM RESPONSE FACTOR HOMOLOG"/>
    <property type="match status" value="1"/>
</dbReference>
<dbReference type="Pfam" id="PF01486">
    <property type="entry name" value="K-box"/>
    <property type="match status" value="1"/>
</dbReference>
<dbReference type="Pfam" id="PF00319">
    <property type="entry name" value="SRF-TF"/>
    <property type="match status" value="1"/>
</dbReference>
<dbReference type="PRINTS" id="PR00404">
    <property type="entry name" value="MADSDOMAIN"/>
</dbReference>
<dbReference type="SMART" id="SM00432">
    <property type="entry name" value="MADS"/>
    <property type="match status" value="1"/>
</dbReference>
<dbReference type="SUPFAM" id="SSF55455">
    <property type="entry name" value="SRF-like"/>
    <property type="match status" value="1"/>
</dbReference>
<dbReference type="PROSITE" id="PS51297">
    <property type="entry name" value="K_BOX"/>
    <property type="match status" value="1"/>
</dbReference>
<dbReference type="PROSITE" id="PS00350">
    <property type="entry name" value="MADS_BOX_1"/>
    <property type="match status" value="1"/>
</dbReference>
<dbReference type="PROSITE" id="PS50066">
    <property type="entry name" value="MADS_BOX_2"/>
    <property type="match status" value="1"/>
</dbReference>
<sequence length="148" mass="17548">MGRGRVEMKRIENKINRQVTFSKRRAGLLKKAHEISILCDAEVSLIVFSHKGKLFEYSSESCMEKVLERYERYSYAEKQLKAPDSHVNAQTNWSMEYSRLKAKIELWERNQRHYLGEDLESISIKELQNLEQQLDTSLKHIRSRKVCK</sequence>
<protein>
    <recommendedName>
        <fullName>Truncated transcription factor CAULIFLOWER D</fullName>
        <shortName>BobCAL-d</shortName>
    </recommendedName>
    <alternativeName>
        <fullName>Agamous-like MADS-box protein CAL-D</fullName>
    </alternativeName>
</protein>
<comment type="function">
    <text evidence="1">Probable transcription factor that promotes early floral meristem identity in synergy with APETALA1, FRUITFULL and LEAFY. Is required subsequently for the transition of an inflorescence meristem into a floral meristem. Seems to be partially redundant to the function of APETALA1 (By similarity).</text>
</comment>
<comment type="subunit">
    <text evidence="1">Homodimer capable of binding to CArG-box sequences.</text>
</comment>
<comment type="subcellular location">
    <subcellularLocation>
        <location evidence="2">Nucleus</location>
    </subcellularLocation>
</comment>
<comment type="miscellaneous">
    <text>This is a truncated version of CAULIFLOWER that may contribute to the 'cauliflower'-shaped floral meristem (curd). This trait has likely been selected by early farmers during the domestication of modified inflorescence structures.</text>
</comment>
<organism>
    <name type="scientific">Brassica oleracea var. botrytis</name>
    <name type="common">Cauliflower</name>
    <dbReference type="NCBI Taxonomy" id="3715"/>
    <lineage>
        <taxon>Eukaryota</taxon>
        <taxon>Viridiplantae</taxon>
        <taxon>Streptophyta</taxon>
        <taxon>Embryophyta</taxon>
        <taxon>Tracheophyta</taxon>
        <taxon>Spermatophyta</taxon>
        <taxon>Magnoliopsida</taxon>
        <taxon>eudicotyledons</taxon>
        <taxon>Gunneridae</taxon>
        <taxon>Pentapetalae</taxon>
        <taxon>rosids</taxon>
        <taxon>malvids</taxon>
        <taxon>Brassicales</taxon>
        <taxon>Brassicaceae</taxon>
        <taxon>Brassiceae</taxon>
        <taxon>Brassica</taxon>
    </lineage>
</organism>
<accession>Q6R4R6</accession>
<feature type="chain" id="PRO_0000417143" description="Truncated transcription factor CAULIFLOWER D">
    <location>
        <begin position="1"/>
        <end position="148"/>
    </location>
</feature>
<feature type="domain" description="MADS-box" evidence="2">
    <location>
        <begin position="1"/>
        <end position="61"/>
    </location>
</feature>
<feature type="domain" description="K-box; partial" evidence="3">
    <location>
        <begin position="90"/>
        <end position="148"/>
    </location>
</feature>
<reference key="1">
    <citation type="submission" date="2003-12" db="EMBL/GenBank/DDBJ databases">
        <authorList>
            <person name="He Y.-K."/>
            <person name="Cao W.-G."/>
            <person name="Shen R.-J."/>
            <person name="Liu P.-L."/>
        </authorList>
    </citation>
    <scope>NUCLEOTIDE SEQUENCE [MRNA]</scope>
    <source>
        <tissue>Flower meristem</tissue>
    </source>
</reference>
<reference key="2">
    <citation type="journal article" date="2000" name="Genetics">
        <title>Variation and selection at the CAULIFLOWER floral homeotic gene accompanying the evolution of domesticated Brassica oleracea.</title>
        <authorList>
            <person name="Purugganan M.D."/>
            <person name="Boyles A.L."/>
            <person name="Suddith J.I."/>
        </authorList>
    </citation>
    <scope>REVIEW</scope>
    <scope>GENE FAMILY</scope>
</reference>
<proteinExistence type="evidence at transcript level"/>
<name>CALD_BRAOB</name>
<keyword id="KW-0010">Activator</keyword>
<keyword id="KW-0175">Coiled coil</keyword>
<keyword id="KW-0217">Developmental protein</keyword>
<keyword id="KW-0221">Differentiation</keyword>
<keyword id="KW-0238">DNA-binding</keyword>
<keyword id="KW-0287">Flowering</keyword>
<keyword id="KW-0539">Nucleus</keyword>
<keyword id="KW-0804">Transcription</keyword>
<keyword id="KW-0805">Transcription regulation</keyword>
<gene>
    <name type="primary">CAL-D</name>
</gene>